<protein>
    <recommendedName>
        <fullName evidence="1">Adenylate kinase</fullName>
        <shortName evidence="1">AK</shortName>
        <ecNumber evidence="1">2.7.4.3</ecNumber>
    </recommendedName>
    <alternativeName>
        <fullName evidence="1">ATP-AMP transphosphorylase</fullName>
    </alternativeName>
    <alternativeName>
        <fullName evidence="1">ATP:AMP phosphotransferase</fullName>
    </alternativeName>
    <alternativeName>
        <fullName evidence="1">Adenylate monophosphate kinase</fullName>
    </alternativeName>
</protein>
<evidence type="ECO:0000255" key="1">
    <source>
        <dbReference type="HAMAP-Rule" id="MF_00235"/>
    </source>
</evidence>
<keyword id="KW-0067">ATP-binding</keyword>
<keyword id="KW-0963">Cytoplasm</keyword>
<keyword id="KW-0418">Kinase</keyword>
<keyword id="KW-0545">Nucleotide biosynthesis</keyword>
<keyword id="KW-0547">Nucleotide-binding</keyword>
<keyword id="KW-0808">Transferase</keyword>
<sequence length="192" mass="21481">MRIVLLGPPGAGKGTQAKMLCEEYHIPQLSTGDMLREVIRRETEIGKKAKAMINAGTLVSDSIVNQIVSDRIDESDCINGFVLDGYPRTVGQAEVLQQVLQSKNMQLDAVIELIVDEDALLERMKKRVQETIIAGGQVRSDDNPVAFAKRLVEYREKTAPLSEFYLQRRLLKLVDGMIGVTEVSRKIREVLK</sequence>
<organism>
    <name type="scientific">Bartonella henselae (strain ATCC 49882 / DSM 28221 / CCUG 30454 / Houston 1)</name>
    <name type="common">Rochalimaea henselae</name>
    <dbReference type="NCBI Taxonomy" id="283166"/>
    <lineage>
        <taxon>Bacteria</taxon>
        <taxon>Pseudomonadati</taxon>
        <taxon>Pseudomonadota</taxon>
        <taxon>Alphaproteobacteria</taxon>
        <taxon>Hyphomicrobiales</taxon>
        <taxon>Bartonellaceae</taxon>
        <taxon>Bartonella</taxon>
    </lineage>
</organism>
<comment type="function">
    <text evidence="1">Catalyzes the reversible transfer of the terminal phosphate group between ATP and AMP. Plays an important role in cellular energy homeostasis and in adenine nucleotide metabolism.</text>
</comment>
<comment type="catalytic activity">
    <reaction evidence="1">
        <text>AMP + ATP = 2 ADP</text>
        <dbReference type="Rhea" id="RHEA:12973"/>
        <dbReference type="ChEBI" id="CHEBI:30616"/>
        <dbReference type="ChEBI" id="CHEBI:456215"/>
        <dbReference type="ChEBI" id="CHEBI:456216"/>
        <dbReference type="EC" id="2.7.4.3"/>
    </reaction>
</comment>
<comment type="pathway">
    <text evidence="1">Purine metabolism; AMP biosynthesis via salvage pathway; AMP from ADP: step 1/1.</text>
</comment>
<comment type="subunit">
    <text evidence="1">Monomer.</text>
</comment>
<comment type="subcellular location">
    <subcellularLocation>
        <location evidence="1">Cytoplasm</location>
    </subcellularLocation>
</comment>
<comment type="domain">
    <text evidence="1">Consists of three domains, a large central CORE domain and two small peripheral domains, NMPbind and LID, which undergo movements during catalysis. The LID domain closes over the site of phosphoryl transfer upon ATP binding. Assembling and dissambling the active center during each catalytic cycle provides an effective means to prevent ATP hydrolysis.</text>
</comment>
<comment type="similarity">
    <text evidence="1">Belongs to the adenylate kinase family.</text>
</comment>
<gene>
    <name evidence="1" type="primary">adk</name>
    <name type="ordered locus">BH10300</name>
</gene>
<reference key="1">
    <citation type="journal article" date="2004" name="Proc. Natl. Acad. Sci. U.S.A.">
        <title>The louse-borne human pathogen Bartonella quintana is a genomic derivative of the zoonotic agent Bartonella henselae.</title>
        <authorList>
            <person name="Alsmark U.C.M."/>
            <person name="Frank A.C."/>
            <person name="Karlberg E.O."/>
            <person name="Legault B.-A."/>
            <person name="Ardell D.H."/>
            <person name="Canbaeck B."/>
            <person name="Eriksson A.-S."/>
            <person name="Naeslund A.K."/>
            <person name="Handley S.A."/>
            <person name="Huvet M."/>
            <person name="La Scola B."/>
            <person name="Holmberg M."/>
            <person name="Andersson S.G.E."/>
        </authorList>
    </citation>
    <scope>NUCLEOTIDE SEQUENCE [LARGE SCALE GENOMIC DNA]</scope>
    <source>
        <strain>ATCC 49882 / DSM 28221 / CCUG 30454 / Houston 1</strain>
    </source>
</reference>
<accession>Q6G2Y6</accession>
<feature type="chain" id="PRO_0000158732" description="Adenylate kinase">
    <location>
        <begin position="1"/>
        <end position="192"/>
    </location>
</feature>
<feature type="region of interest" description="NMP" evidence="1">
    <location>
        <begin position="30"/>
        <end position="59"/>
    </location>
</feature>
<feature type="region of interest" description="LID" evidence="1">
    <location>
        <begin position="126"/>
        <end position="142"/>
    </location>
</feature>
<feature type="binding site" evidence="1">
    <location>
        <begin position="10"/>
        <end position="15"/>
    </location>
    <ligand>
        <name>ATP</name>
        <dbReference type="ChEBI" id="CHEBI:30616"/>
    </ligand>
</feature>
<feature type="binding site" evidence="1">
    <location>
        <position position="31"/>
    </location>
    <ligand>
        <name>AMP</name>
        <dbReference type="ChEBI" id="CHEBI:456215"/>
    </ligand>
</feature>
<feature type="binding site" evidence="1">
    <location>
        <position position="36"/>
    </location>
    <ligand>
        <name>AMP</name>
        <dbReference type="ChEBI" id="CHEBI:456215"/>
    </ligand>
</feature>
<feature type="binding site" evidence="1">
    <location>
        <begin position="57"/>
        <end position="59"/>
    </location>
    <ligand>
        <name>AMP</name>
        <dbReference type="ChEBI" id="CHEBI:456215"/>
    </ligand>
</feature>
<feature type="binding site" evidence="1">
    <location>
        <begin position="85"/>
        <end position="88"/>
    </location>
    <ligand>
        <name>AMP</name>
        <dbReference type="ChEBI" id="CHEBI:456215"/>
    </ligand>
</feature>
<feature type="binding site" evidence="1">
    <location>
        <position position="92"/>
    </location>
    <ligand>
        <name>AMP</name>
        <dbReference type="ChEBI" id="CHEBI:456215"/>
    </ligand>
</feature>
<feature type="binding site" evidence="1">
    <location>
        <position position="127"/>
    </location>
    <ligand>
        <name>ATP</name>
        <dbReference type="ChEBI" id="CHEBI:30616"/>
    </ligand>
</feature>
<feature type="binding site" evidence="1">
    <location>
        <position position="139"/>
    </location>
    <ligand>
        <name>AMP</name>
        <dbReference type="ChEBI" id="CHEBI:456215"/>
    </ligand>
</feature>
<feature type="binding site" evidence="1">
    <location>
        <position position="150"/>
    </location>
    <ligand>
        <name>AMP</name>
        <dbReference type="ChEBI" id="CHEBI:456215"/>
    </ligand>
</feature>
<feature type="binding site" evidence="1">
    <location>
        <position position="178"/>
    </location>
    <ligand>
        <name>ATP</name>
        <dbReference type="ChEBI" id="CHEBI:30616"/>
    </ligand>
</feature>
<proteinExistence type="inferred from homology"/>
<dbReference type="EC" id="2.7.4.3" evidence="1"/>
<dbReference type="EMBL" id="BX897699">
    <property type="protein sequence ID" value="CAF27821.1"/>
    <property type="molecule type" value="Genomic_DNA"/>
</dbReference>
<dbReference type="RefSeq" id="WP_011180893.1">
    <property type="nucleotide sequence ID" value="NZ_LRIJ02000001.1"/>
</dbReference>
<dbReference type="SMR" id="Q6G2Y6"/>
<dbReference type="PaxDb" id="283166-BH10300"/>
<dbReference type="EnsemblBacteria" id="CAF27821">
    <property type="protein sequence ID" value="CAF27821"/>
    <property type="gene ID" value="BH10300"/>
</dbReference>
<dbReference type="KEGG" id="bhe:BH10300"/>
<dbReference type="eggNOG" id="COG0563">
    <property type="taxonomic scope" value="Bacteria"/>
</dbReference>
<dbReference type="OrthoDB" id="9805030at2"/>
<dbReference type="UniPathway" id="UPA00588">
    <property type="reaction ID" value="UER00649"/>
</dbReference>
<dbReference type="Proteomes" id="UP000000421">
    <property type="component" value="Chromosome"/>
</dbReference>
<dbReference type="GO" id="GO:0005737">
    <property type="term" value="C:cytoplasm"/>
    <property type="evidence" value="ECO:0007669"/>
    <property type="project" value="UniProtKB-SubCell"/>
</dbReference>
<dbReference type="GO" id="GO:0004017">
    <property type="term" value="F:adenylate kinase activity"/>
    <property type="evidence" value="ECO:0007669"/>
    <property type="project" value="UniProtKB-UniRule"/>
</dbReference>
<dbReference type="GO" id="GO:0005524">
    <property type="term" value="F:ATP binding"/>
    <property type="evidence" value="ECO:0007669"/>
    <property type="project" value="UniProtKB-UniRule"/>
</dbReference>
<dbReference type="GO" id="GO:0044209">
    <property type="term" value="P:AMP salvage"/>
    <property type="evidence" value="ECO:0007669"/>
    <property type="project" value="UniProtKB-UniRule"/>
</dbReference>
<dbReference type="CDD" id="cd01428">
    <property type="entry name" value="ADK"/>
    <property type="match status" value="1"/>
</dbReference>
<dbReference type="Gene3D" id="3.40.50.300">
    <property type="entry name" value="P-loop containing nucleotide triphosphate hydrolases"/>
    <property type="match status" value="1"/>
</dbReference>
<dbReference type="HAMAP" id="MF_00235">
    <property type="entry name" value="Adenylate_kinase_Adk"/>
    <property type="match status" value="1"/>
</dbReference>
<dbReference type="InterPro" id="IPR006259">
    <property type="entry name" value="Adenyl_kin_sub"/>
</dbReference>
<dbReference type="InterPro" id="IPR000850">
    <property type="entry name" value="Adenylat/UMP-CMP_kin"/>
</dbReference>
<dbReference type="InterPro" id="IPR033690">
    <property type="entry name" value="Adenylat_kinase_CS"/>
</dbReference>
<dbReference type="InterPro" id="IPR027417">
    <property type="entry name" value="P-loop_NTPase"/>
</dbReference>
<dbReference type="NCBIfam" id="TIGR01351">
    <property type="entry name" value="adk"/>
    <property type="match status" value="1"/>
</dbReference>
<dbReference type="NCBIfam" id="NF001381">
    <property type="entry name" value="PRK00279.1-3"/>
    <property type="match status" value="1"/>
</dbReference>
<dbReference type="NCBIfam" id="NF011100">
    <property type="entry name" value="PRK14527.1"/>
    <property type="match status" value="1"/>
</dbReference>
<dbReference type="NCBIfam" id="NF011105">
    <property type="entry name" value="PRK14532.1"/>
    <property type="match status" value="1"/>
</dbReference>
<dbReference type="PANTHER" id="PTHR23359">
    <property type="entry name" value="NUCLEOTIDE KINASE"/>
    <property type="match status" value="1"/>
</dbReference>
<dbReference type="Pfam" id="PF00406">
    <property type="entry name" value="ADK"/>
    <property type="match status" value="1"/>
</dbReference>
<dbReference type="PRINTS" id="PR00094">
    <property type="entry name" value="ADENYLTKNASE"/>
</dbReference>
<dbReference type="SUPFAM" id="SSF52540">
    <property type="entry name" value="P-loop containing nucleoside triphosphate hydrolases"/>
    <property type="match status" value="1"/>
</dbReference>
<dbReference type="PROSITE" id="PS00113">
    <property type="entry name" value="ADENYLATE_KINASE"/>
    <property type="match status" value="1"/>
</dbReference>
<name>KAD_BARHE</name>